<name>MENH_ECO57</name>
<protein>
    <recommendedName>
        <fullName evidence="1">2-succinyl-6-hydroxy-2,4-cyclohexadiene-1-carboxylate synthase</fullName>
        <shortName evidence="1">SHCHC synthase</shortName>
        <ecNumber evidence="1">4.2.99.20</ecNumber>
    </recommendedName>
</protein>
<proteinExistence type="inferred from homology"/>
<evidence type="ECO:0000255" key="1">
    <source>
        <dbReference type="HAMAP-Rule" id="MF_01660"/>
    </source>
</evidence>
<organism>
    <name type="scientific">Escherichia coli O157:H7</name>
    <dbReference type="NCBI Taxonomy" id="83334"/>
    <lineage>
        <taxon>Bacteria</taxon>
        <taxon>Pseudomonadati</taxon>
        <taxon>Pseudomonadota</taxon>
        <taxon>Gammaproteobacteria</taxon>
        <taxon>Enterobacterales</taxon>
        <taxon>Enterobacteriaceae</taxon>
        <taxon>Escherichia</taxon>
    </lineage>
</organism>
<sequence length="252" mass="27645">MILHAQAKHGKPGLPWLVFLHGFSGDCLEWQEVGEAFADYSRLYVDLPGHGGSAAISVDGFDDVTDLLRKTLVSYNILSFWLVGYSLGGRVAMMAACQGLAGLCGVVVEGGHPGLQNAEQRAERQRSDRQWAQRFRSEPLTAVFADWYQQPVFASLNDDQRRELVVLRSNNNGATLAAMLEATSLAVQPDLRANLSARTFAFYYLCGERDSKFRALAAELAADCHVIPRAGHNAHRENPAGVIASLAQILRF</sequence>
<reference key="1">
    <citation type="journal article" date="2001" name="Nature">
        <title>Genome sequence of enterohaemorrhagic Escherichia coli O157:H7.</title>
        <authorList>
            <person name="Perna N.T."/>
            <person name="Plunkett G. III"/>
            <person name="Burland V."/>
            <person name="Mau B."/>
            <person name="Glasner J.D."/>
            <person name="Rose D.J."/>
            <person name="Mayhew G.F."/>
            <person name="Evans P.S."/>
            <person name="Gregor J."/>
            <person name="Kirkpatrick H.A."/>
            <person name="Posfai G."/>
            <person name="Hackett J."/>
            <person name="Klink S."/>
            <person name="Boutin A."/>
            <person name="Shao Y."/>
            <person name="Miller L."/>
            <person name="Grotbeck E.J."/>
            <person name="Davis N.W."/>
            <person name="Lim A."/>
            <person name="Dimalanta E.T."/>
            <person name="Potamousis K."/>
            <person name="Apodaca J."/>
            <person name="Anantharaman T.S."/>
            <person name="Lin J."/>
            <person name="Yen G."/>
            <person name="Schwartz D.C."/>
            <person name="Welch R.A."/>
            <person name="Blattner F.R."/>
        </authorList>
    </citation>
    <scope>NUCLEOTIDE SEQUENCE [LARGE SCALE GENOMIC DNA]</scope>
    <source>
        <strain>O157:H7 / EDL933 / ATCC 700927 / EHEC</strain>
    </source>
</reference>
<reference key="2">
    <citation type="journal article" date="2001" name="DNA Res.">
        <title>Complete genome sequence of enterohemorrhagic Escherichia coli O157:H7 and genomic comparison with a laboratory strain K-12.</title>
        <authorList>
            <person name="Hayashi T."/>
            <person name="Makino K."/>
            <person name="Ohnishi M."/>
            <person name="Kurokawa K."/>
            <person name="Ishii K."/>
            <person name="Yokoyama K."/>
            <person name="Han C.-G."/>
            <person name="Ohtsubo E."/>
            <person name="Nakayama K."/>
            <person name="Murata T."/>
            <person name="Tanaka M."/>
            <person name="Tobe T."/>
            <person name="Iida T."/>
            <person name="Takami H."/>
            <person name="Honda T."/>
            <person name="Sasakawa C."/>
            <person name="Ogasawara N."/>
            <person name="Yasunaga T."/>
            <person name="Kuhara S."/>
            <person name="Shiba T."/>
            <person name="Hattori M."/>
            <person name="Shinagawa H."/>
        </authorList>
    </citation>
    <scope>NUCLEOTIDE SEQUENCE [LARGE SCALE GENOMIC DNA]</scope>
    <source>
        <strain>O157:H7 / Sakai / RIMD 0509952 / EHEC</strain>
    </source>
</reference>
<feature type="chain" id="PRO_0000341910" description="2-succinyl-6-hydroxy-2,4-cyclohexadiene-1-carboxylate synthase">
    <location>
        <begin position="1"/>
        <end position="252"/>
    </location>
</feature>
<keyword id="KW-0456">Lyase</keyword>
<keyword id="KW-0474">Menaquinone biosynthesis</keyword>
<keyword id="KW-1185">Reference proteome</keyword>
<gene>
    <name evidence="1" type="primary">menH</name>
    <name type="ordered locus">Z3523</name>
    <name type="ordered locus">ECs3151</name>
</gene>
<accession>Q8XDX9</accession>
<accession>Q7AC17</accession>
<comment type="function">
    <text evidence="1">Catalyzes a proton abstraction reaction that results in 2,5-elimination of pyruvate from 2-succinyl-5-enolpyruvyl-6-hydroxy-3-cyclohexene-1-carboxylate (SEPHCHC) and the formation of 2-succinyl-6-hydroxy-2,4-cyclohexadiene-1-carboxylate (SHCHC).</text>
</comment>
<comment type="catalytic activity">
    <reaction evidence="1">
        <text>5-enolpyruvoyl-6-hydroxy-2-succinyl-cyclohex-3-ene-1-carboxylate = (1R,6R)-6-hydroxy-2-succinyl-cyclohexa-2,4-diene-1-carboxylate + pyruvate</text>
        <dbReference type="Rhea" id="RHEA:25597"/>
        <dbReference type="ChEBI" id="CHEBI:15361"/>
        <dbReference type="ChEBI" id="CHEBI:58689"/>
        <dbReference type="ChEBI" id="CHEBI:58818"/>
        <dbReference type="EC" id="4.2.99.20"/>
    </reaction>
</comment>
<comment type="pathway">
    <text evidence="1">Quinol/quinone metabolism; 1,4-dihydroxy-2-naphthoate biosynthesis; 1,4-dihydroxy-2-naphthoate from chorismate: step 3/7.</text>
</comment>
<comment type="pathway">
    <text evidence="1">Quinol/quinone metabolism; menaquinone biosynthesis.</text>
</comment>
<comment type="subunit">
    <text evidence="1">Monomer.</text>
</comment>
<comment type="similarity">
    <text evidence="1">Belongs to the AB hydrolase superfamily. MenH family.</text>
</comment>
<dbReference type="EC" id="4.2.99.20" evidence="1"/>
<dbReference type="EMBL" id="AE005174">
    <property type="protein sequence ID" value="AAG57396.1"/>
    <property type="molecule type" value="Genomic_DNA"/>
</dbReference>
<dbReference type="EMBL" id="BA000007">
    <property type="protein sequence ID" value="BAB36574.1"/>
    <property type="molecule type" value="Genomic_DNA"/>
</dbReference>
<dbReference type="PIR" id="G91022">
    <property type="entry name" value="G91022"/>
</dbReference>
<dbReference type="PIR" id="H85866">
    <property type="entry name" value="H85866"/>
</dbReference>
<dbReference type="RefSeq" id="NP_311178.1">
    <property type="nucleotide sequence ID" value="NC_002695.1"/>
</dbReference>
<dbReference type="RefSeq" id="WP_000600543.1">
    <property type="nucleotide sequence ID" value="NZ_VOAI01000001.1"/>
</dbReference>
<dbReference type="SMR" id="Q8XDX9"/>
<dbReference type="STRING" id="155864.Z3523"/>
<dbReference type="ESTHER" id="ecoli-YFBB">
    <property type="family name" value="MenH_SHCHC"/>
</dbReference>
<dbReference type="MEROPS" id="S33.996"/>
<dbReference type="GeneID" id="916859"/>
<dbReference type="KEGG" id="ece:Z3523"/>
<dbReference type="KEGG" id="ecs:ECs_3151"/>
<dbReference type="PATRIC" id="fig|386585.9.peg.3288"/>
<dbReference type="eggNOG" id="COG0596">
    <property type="taxonomic scope" value="Bacteria"/>
</dbReference>
<dbReference type="HOGENOM" id="CLU_020336_38_2_6"/>
<dbReference type="OMA" id="LNDWYQQ"/>
<dbReference type="UniPathway" id="UPA00079"/>
<dbReference type="UniPathway" id="UPA01057">
    <property type="reaction ID" value="UER00900"/>
</dbReference>
<dbReference type="Proteomes" id="UP000000558">
    <property type="component" value="Chromosome"/>
</dbReference>
<dbReference type="Proteomes" id="UP000002519">
    <property type="component" value="Chromosome"/>
</dbReference>
<dbReference type="GO" id="GO:0070205">
    <property type="term" value="F:2-succinyl-6-hydroxy-2,4-cyclohexadiene-1-carboxylate synthase activity"/>
    <property type="evidence" value="ECO:0007669"/>
    <property type="project" value="UniProtKB-UniRule"/>
</dbReference>
<dbReference type="GO" id="GO:0009234">
    <property type="term" value="P:menaquinone biosynthetic process"/>
    <property type="evidence" value="ECO:0007669"/>
    <property type="project" value="UniProtKB-UniRule"/>
</dbReference>
<dbReference type="FunFam" id="3.40.50.1820:FF:000038">
    <property type="entry name" value="2-succinyl-6-hydroxy-2,4-cyclohexadiene-1-carboxylate synthase"/>
    <property type="match status" value="1"/>
</dbReference>
<dbReference type="Gene3D" id="3.40.50.1820">
    <property type="entry name" value="alpha/beta hydrolase"/>
    <property type="match status" value="1"/>
</dbReference>
<dbReference type="HAMAP" id="MF_01660">
    <property type="entry name" value="MenH"/>
    <property type="match status" value="1"/>
</dbReference>
<dbReference type="InterPro" id="IPR000073">
    <property type="entry name" value="AB_hydrolase_1"/>
</dbReference>
<dbReference type="InterPro" id="IPR029058">
    <property type="entry name" value="AB_hydrolase_fold"/>
</dbReference>
<dbReference type="InterPro" id="IPR022485">
    <property type="entry name" value="SHCHC_synthase_MenH"/>
</dbReference>
<dbReference type="NCBIfam" id="TIGR03695">
    <property type="entry name" value="menH_SHCHC"/>
    <property type="match status" value="1"/>
</dbReference>
<dbReference type="NCBIfam" id="NF008340">
    <property type="entry name" value="PRK11126.1"/>
    <property type="match status" value="1"/>
</dbReference>
<dbReference type="PANTHER" id="PTHR42916">
    <property type="entry name" value="2-SUCCINYL-5-ENOLPYRUVYL-6-HYDROXY-3-CYCLOHEXENE-1-CARBOXYLATE SYNTHASE"/>
    <property type="match status" value="1"/>
</dbReference>
<dbReference type="PANTHER" id="PTHR42916:SF1">
    <property type="entry name" value="PROTEIN PHYLLO, CHLOROPLASTIC"/>
    <property type="match status" value="1"/>
</dbReference>
<dbReference type="Pfam" id="PF12697">
    <property type="entry name" value="Abhydrolase_6"/>
    <property type="match status" value="1"/>
</dbReference>
<dbReference type="SUPFAM" id="SSF53474">
    <property type="entry name" value="alpha/beta-Hydrolases"/>
    <property type="match status" value="1"/>
</dbReference>